<comment type="function">
    <text evidence="2">Removes the N-terminal methionine from nascent proteins. The N-terminal methionine is often cleaved when the second residue in the primary sequence is small and uncharged (Met-Ala-, Cys, Gly, Pro, Ser, Thr, or Val). Requires deformylation of the N(alpha)-formylated initiator methionine before it can be hydrolyzed.</text>
</comment>
<comment type="catalytic activity">
    <reaction evidence="2">
        <text>Release of N-terminal amino acids, preferentially methionine, from peptides and arylamides.</text>
        <dbReference type="EC" id="3.4.11.18"/>
    </reaction>
</comment>
<comment type="cofactor">
    <cofactor evidence="2">
        <name>Co(2+)</name>
        <dbReference type="ChEBI" id="CHEBI:48828"/>
    </cofactor>
    <cofactor evidence="2">
        <name>Zn(2+)</name>
        <dbReference type="ChEBI" id="CHEBI:29105"/>
    </cofactor>
    <cofactor evidence="2">
        <name>Mn(2+)</name>
        <dbReference type="ChEBI" id="CHEBI:29035"/>
    </cofactor>
    <cofactor evidence="2">
        <name>Fe(2+)</name>
        <dbReference type="ChEBI" id="CHEBI:29033"/>
    </cofactor>
    <text evidence="2">Binds 2 divalent metal cations per subunit. Has a high-affinity and a low affinity metal-binding site. The true nature of the physiological cofactor is under debate. The enzyme is active with cobalt, zinc, manganese or divalent iron ions. Most likely, methionine aminopeptidases function as mononuclear Fe(2+)-metalloproteases under physiological conditions, and the catalytically relevant metal-binding site has been assigned to the histidine-containing high-affinity site.</text>
</comment>
<comment type="subunit">
    <text evidence="2">Monomer.</text>
</comment>
<comment type="similarity">
    <text evidence="2">Belongs to the peptidase M24A family. Methionine aminopeptidase type 1 subfamily.</text>
</comment>
<sequence>MAISIKTSEDIEKMRVAGRLAAEVLEMIEPYIKPGVTTGELDRICNDYIVNEQHAISACLGYHGYPKSVCISINEVVCHGIPDDAKHLKDGDIVNIDVTVIKDEFHGDTSKMFIVGKPTILGERLCRVTQESLYLGIKMVKPGIRLRTIGAAIQKYAEGEGFSVVREYCGHGIGRGFHEEPQVLHYDADDGGVVLQPGMTFTIEPMLNAGDYRIRTMKDGWTVKTKDRSLSAQYEHTIVVTENGCEILTLRKDDTIPAIITHDE</sequence>
<organism>
    <name type="scientific">Salmonella typhi</name>
    <dbReference type="NCBI Taxonomy" id="90370"/>
    <lineage>
        <taxon>Bacteria</taxon>
        <taxon>Pseudomonadati</taxon>
        <taxon>Pseudomonadota</taxon>
        <taxon>Gammaproteobacteria</taxon>
        <taxon>Enterobacterales</taxon>
        <taxon>Enterobacteriaceae</taxon>
        <taxon>Salmonella</taxon>
    </lineage>
</organism>
<evidence type="ECO:0000250" key="1"/>
<evidence type="ECO:0000255" key="2">
    <source>
        <dbReference type="HAMAP-Rule" id="MF_01974"/>
    </source>
</evidence>
<proteinExistence type="inferred from homology"/>
<gene>
    <name evidence="2" type="primary">map</name>
    <name type="synonym">pepM</name>
    <name type="ordered locus">STY0238</name>
    <name type="ordered locus">t0216</name>
</gene>
<reference key="1">
    <citation type="journal article" date="2001" name="Nature">
        <title>Complete genome sequence of a multiple drug resistant Salmonella enterica serovar Typhi CT18.</title>
        <authorList>
            <person name="Parkhill J."/>
            <person name="Dougan G."/>
            <person name="James K.D."/>
            <person name="Thomson N.R."/>
            <person name="Pickard D."/>
            <person name="Wain J."/>
            <person name="Churcher C.M."/>
            <person name="Mungall K.L."/>
            <person name="Bentley S.D."/>
            <person name="Holden M.T.G."/>
            <person name="Sebaihia M."/>
            <person name="Baker S."/>
            <person name="Basham D."/>
            <person name="Brooks K."/>
            <person name="Chillingworth T."/>
            <person name="Connerton P."/>
            <person name="Cronin A."/>
            <person name="Davis P."/>
            <person name="Davies R.M."/>
            <person name="Dowd L."/>
            <person name="White N."/>
            <person name="Farrar J."/>
            <person name="Feltwell T."/>
            <person name="Hamlin N."/>
            <person name="Haque A."/>
            <person name="Hien T.T."/>
            <person name="Holroyd S."/>
            <person name="Jagels K."/>
            <person name="Krogh A."/>
            <person name="Larsen T.S."/>
            <person name="Leather S."/>
            <person name="Moule S."/>
            <person name="O'Gaora P."/>
            <person name="Parry C."/>
            <person name="Quail M.A."/>
            <person name="Rutherford K.M."/>
            <person name="Simmonds M."/>
            <person name="Skelton J."/>
            <person name="Stevens K."/>
            <person name="Whitehead S."/>
            <person name="Barrell B.G."/>
        </authorList>
    </citation>
    <scope>NUCLEOTIDE SEQUENCE [LARGE SCALE GENOMIC DNA]</scope>
    <source>
        <strain>CT18</strain>
    </source>
</reference>
<reference key="2">
    <citation type="journal article" date="2003" name="J. Bacteriol.">
        <title>Comparative genomics of Salmonella enterica serovar Typhi strains Ty2 and CT18.</title>
        <authorList>
            <person name="Deng W."/>
            <person name="Liou S.-R."/>
            <person name="Plunkett G. III"/>
            <person name="Mayhew G.F."/>
            <person name="Rose D.J."/>
            <person name="Burland V."/>
            <person name="Kodoyianni V."/>
            <person name="Schwartz D.C."/>
            <person name="Blattner F.R."/>
        </authorList>
    </citation>
    <scope>NUCLEOTIDE SEQUENCE [LARGE SCALE GENOMIC DNA]</scope>
    <source>
        <strain>ATCC 700931 / Ty2</strain>
    </source>
</reference>
<keyword id="KW-0031">Aminopeptidase</keyword>
<keyword id="KW-0378">Hydrolase</keyword>
<keyword id="KW-0479">Metal-binding</keyword>
<keyword id="KW-0645">Protease</keyword>
<dbReference type="EC" id="3.4.11.18" evidence="2"/>
<dbReference type="EMBL" id="AL513382">
    <property type="protein sequence ID" value="CAD01369.1"/>
    <property type="molecule type" value="Genomic_DNA"/>
</dbReference>
<dbReference type="EMBL" id="AE014613">
    <property type="protein sequence ID" value="AAO67946.1"/>
    <property type="molecule type" value="Genomic_DNA"/>
</dbReference>
<dbReference type="RefSeq" id="NP_454822.1">
    <property type="nucleotide sequence ID" value="NC_003198.1"/>
</dbReference>
<dbReference type="RefSeq" id="WP_001018214.1">
    <property type="nucleotide sequence ID" value="NZ_WSUR01000009.1"/>
</dbReference>
<dbReference type="SMR" id="P0A1X7"/>
<dbReference type="STRING" id="220341.gene:17584271"/>
<dbReference type="MEROPS" id="M24.001"/>
<dbReference type="KEGG" id="stt:t0216"/>
<dbReference type="KEGG" id="sty:STY0238"/>
<dbReference type="PATRIC" id="fig|220341.7.peg.238"/>
<dbReference type="eggNOG" id="COG0024">
    <property type="taxonomic scope" value="Bacteria"/>
</dbReference>
<dbReference type="HOGENOM" id="CLU_015857_0_0_6"/>
<dbReference type="OMA" id="FYGDHAY"/>
<dbReference type="OrthoDB" id="9802055at2"/>
<dbReference type="Proteomes" id="UP000000541">
    <property type="component" value="Chromosome"/>
</dbReference>
<dbReference type="Proteomes" id="UP000002670">
    <property type="component" value="Chromosome"/>
</dbReference>
<dbReference type="GO" id="GO:0005829">
    <property type="term" value="C:cytosol"/>
    <property type="evidence" value="ECO:0007669"/>
    <property type="project" value="TreeGrafter"/>
</dbReference>
<dbReference type="GO" id="GO:0004239">
    <property type="term" value="F:initiator methionyl aminopeptidase activity"/>
    <property type="evidence" value="ECO:0007669"/>
    <property type="project" value="UniProtKB-UniRule"/>
</dbReference>
<dbReference type="GO" id="GO:0046872">
    <property type="term" value="F:metal ion binding"/>
    <property type="evidence" value="ECO:0007669"/>
    <property type="project" value="UniProtKB-UniRule"/>
</dbReference>
<dbReference type="GO" id="GO:0070006">
    <property type="term" value="F:metalloaminopeptidase activity"/>
    <property type="evidence" value="ECO:0007669"/>
    <property type="project" value="UniProtKB-UniRule"/>
</dbReference>
<dbReference type="GO" id="GO:0006508">
    <property type="term" value="P:proteolysis"/>
    <property type="evidence" value="ECO:0007669"/>
    <property type="project" value="UniProtKB-KW"/>
</dbReference>
<dbReference type="CDD" id="cd01086">
    <property type="entry name" value="MetAP1"/>
    <property type="match status" value="1"/>
</dbReference>
<dbReference type="FunFam" id="3.90.230.10:FF:000001">
    <property type="entry name" value="Methionine aminopeptidase"/>
    <property type="match status" value="1"/>
</dbReference>
<dbReference type="Gene3D" id="3.90.230.10">
    <property type="entry name" value="Creatinase/methionine aminopeptidase superfamily"/>
    <property type="match status" value="1"/>
</dbReference>
<dbReference type="HAMAP" id="MF_01974">
    <property type="entry name" value="MetAP_1"/>
    <property type="match status" value="1"/>
</dbReference>
<dbReference type="InterPro" id="IPR036005">
    <property type="entry name" value="Creatinase/aminopeptidase-like"/>
</dbReference>
<dbReference type="InterPro" id="IPR000994">
    <property type="entry name" value="Pept_M24"/>
</dbReference>
<dbReference type="InterPro" id="IPR001714">
    <property type="entry name" value="Pept_M24_MAP"/>
</dbReference>
<dbReference type="InterPro" id="IPR002467">
    <property type="entry name" value="Pept_M24A_MAP1"/>
</dbReference>
<dbReference type="NCBIfam" id="TIGR00500">
    <property type="entry name" value="met_pdase_I"/>
    <property type="match status" value="1"/>
</dbReference>
<dbReference type="PANTHER" id="PTHR43330">
    <property type="entry name" value="METHIONINE AMINOPEPTIDASE"/>
    <property type="match status" value="1"/>
</dbReference>
<dbReference type="PANTHER" id="PTHR43330:SF27">
    <property type="entry name" value="METHIONINE AMINOPEPTIDASE"/>
    <property type="match status" value="1"/>
</dbReference>
<dbReference type="Pfam" id="PF00557">
    <property type="entry name" value="Peptidase_M24"/>
    <property type="match status" value="1"/>
</dbReference>
<dbReference type="PRINTS" id="PR00599">
    <property type="entry name" value="MAPEPTIDASE"/>
</dbReference>
<dbReference type="SUPFAM" id="SSF55920">
    <property type="entry name" value="Creatinase/aminopeptidase"/>
    <property type="match status" value="1"/>
</dbReference>
<dbReference type="PROSITE" id="PS00680">
    <property type="entry name" value="MAP_1"/>
    <property type="match status" value="1"/>
</dbReference>
<accession>P0A1X7</accession>
<accession>P10882</accession>
<feature type="initiator methionine" description="Removed" evidence="1">
    <location>
        <position position="1"/>
    </location>
</feature>
<feature type="chain" id="PRO_0000148951" description="Methionine aminopeptidase">
    <location>
        <begin position="2"/>
        <end position="264"/>
    </location>
</feature>
<feature type="binding site" evidence="2">
    <location>
        <position position="79"/>
    </location>
    <ligand>
        <name>substrate</name>
    </ligand>
</feature>
<feature type="binding site" evidence="2">
    <location>
        <position position="97"/>
    </location>
    <ligand>
        <name>a divalent metal cation</name>
        <dbReference type="ChEBI" id="CHEBI:60240"/>
        <label>1</label>
    </ligand>
</feature>
<feature type="binding site" evidence="2">
    <location>
        <position position="108"/>
    </location>
    <ligand>
        <name>a divalent metal cation</name>
        <dbReference type="ChEBI" id="CHEBI:60240"/>
        <label>1</label>
    </ligand>
</feature>
<feature type="binding site" evidence="2">
    <location>
        <position position="108"/>
    </location>
    <ligand>
        <name>a divalent metal cation</name>
        <dbReference type="ChEBI" id="CHEBI:60240"/>
        <label>2</label>
        <note>catalytic</note>
    </ligand>
</feature>
<feature type="binding site" evidence="2">
    <location>
        <position position="171"/>
    </location>
    <ligand>
        <name>a divalent metal cation</name>
        <dbReference type="ChEBI" id="CHEBI:60240"/>
        <label>2</label>
        <note>catalytic</note>
    </ligand>
</feature>
<feature type="binding site" evidence="2">
    <location>
        <position position="178"/>
    </location>
    <ligand>
        <name>substrate</name>
    </ligand>
</feature>
<feature type="binding site" evidence="2">
    <location>
        <position position="204"/>
    </location>
    <ligand>
        <name>a divalent metal cation</name>
        <dbReference type="ChEBI" id="CHEBI:60240"/>
        <label>2</label>
        <note>catalytic</note>
    </ligand>
</feature>
<feature type="binding site" evidence="2">
    <location>
        <position position="235"/>
    </location>
    <ligand>
        <name>a divalent metal cation</name>
        <dbReference type="ChEBI" id="CHEBI:60240"/>
        <label>1</label>
    </ligand>
</feature>
<feature type="binding site" evidence="2">
    <location>
        <position position="235"/>
    </location>
    <ligand>
        <name>a divalent metal cation</name>
        <dbReference type="ChEBI" id="CHEBI:60240"/>
        <label>2</label>
        <note>catalytic</note>
    </ligand>
</feature>
<protein>
    <recommendedName>
        <fullName evidence="2">Methionine aminopeptidase</fullName>
        <shortName evidence="2">MAP</shortName>
        <shortName evidence="2">MetAP</shortName>
        <ecNumber evidence="2">3.4.11.18</ecNumber>
    </recommendedName>
    <alternativeName>
        <fullName evidence="2">Peptidase M</fullName>
    </alternativeName>
</protein>
<name>MAP1_SALTI</name>